<accession>P04705</accession>
<keyword id="KW-1185">Reference proteome</keyword>
<keyword id="KW-0677">Repeat</keyword>
<keyword id="KW-0708">Seed storage protein</keyword>
<keyword id="KW-0732">Signal</keyword>
<keyword id="KW-0758">Storage protein</keyword>
<evidence type="ECO:0000250" key="1">
    <source>
        <dbReference type="UniProtKB" id="P04698"/>
    </source>
</evidence>
<evidence type="ECO:0000305" key="2"/>
<organism>
    <name type="scientific">Zea mays</name>
    <name type="common">Maize</name>
    <dbReference type="NCBI Taxonomy" id="4577"/>
    <lineage>
        <taxon>Eukaryota</taxon>
        <taxon>Viridiplantae</taxon>
        <taxon>Streptophyta</taxon>
        <taxon>Embryophyta</taxon>
        <taxon>Tracheophyta</taxon>
        <taxon>Spermatophyta</taxon>
        <taxon>Magnoliopsida</taxon>
        <taxon>Liliopsida</taxon>
        <taxon>Poales</taxon>
        <taxon>Poaceae</taxon>
        <taxon>PACMAD clade</taxon>
        <taxon>Panicoideae</taxon>
        <taxon>Andropogonodae</taxon>
        <taxon>Andropogoneae</taxon>
        <taxon>Tripsacinae</taxon>
        <taxon>Zea</taxon>
    </lineage>
</organism>
<protein>
    <recommendedName>
        <fullName>Zein-alpha PZ19.1</fullName>
    </recommendedName>
    <alternativeName>
        <fullName>19 kDa zein PZ19.1</fullName>
    </alternativeName>
</protein>
<comment type="function">
    <text>Zeins are major seed storage proteins.</text>
</comment>
<comment type="miscellaneous">
    <text>The alpha zeins of 19 kDa and 22 kDa account for 70% of the total zein fraction. They are encoded by a large multigene family.</text>
</comment>
<comment type="miscellaneous">
    <text evidence="1">Structurally, 22K and 19K zeins are composed of nine adjacent, topologically antiparallel helices clustered within a distorted cylinder.</text>
</comment>
<comment type="similarity">
    <text evidence="2">Belongs to the zein family.</text>
</comment>
<feature type="signal peptide">
    <location>
        <begin position="1"/>
        <end position="21"/>
    </location>
</feature>
<feature type="chain" id="PRO_0000041621" description="Zein-alpha PZ19.1">
    <location>
        <begin position="22"/>
        <end position="186" status="greater than"/>
    </location>
</feature>
<feature type="non-terminal residue">
    <location>
        <position position="186"/>
    </location>
</feature>
<sequence>MAAKIFCLIMLLGLSASAATASIFPQCSQAPIASLLPPYLSPAMSSVCENPILLPYRIQQAIAAGILPLSPLFLQQSSALLQQLPLVHLLAQNIRAQQLQQLVLANLAAYSQQQQLPLVHLLAQNIRAQQLQQLVLANLAAYSQQQQFLPFNQQLAAAYPRQFLPFNQLAALNSHAYVQQQQLLPF</sequence>
<reference key="1">
    <citation type="journal article" date="1982" name="Cell">
        <title>Cloning and sequence analysis reveal structural variation among related zein genes in maize.</title>
        <authorList>
            <person name="Pedersen K."/>
            <person name="Devereux J."/>
            <person name="Wilson D.R."/>
            <person name="Sheldon E."/>
            <person name="Larkins B.A."/>
        </authorList>
    </citation>
    <scope>NUCLEOTIDE SEQUENCE [MRNA]</scope>
</reference>
<proteinExistence type="evidence at transcript level"/>
<dbReference type="EMBL" id="J01244">
    <property type="protein sequence ID" value="AAA33526.1"/>
    <property type="molecule type" value="mRNA"/>
</dbReference>
<dbReference type="PIR" id="T03407">
    <property type="entry name" value="T03407"/>
</dbReference>
<dbReference type="STRING" id="4577.P04705"/>
<dbReference type="MaizeGDB" id="58096"/>
<dbReference type="InParanoid" id="P04705"/>
<dbReference type="Proteomes" id="UP000007305">
    <property type="component" value="Unplaced"/>
</dbReference>
<dbReference type="ExpressionAtlas" id="P04705">
    <property type="expression patterns" value="baseline and differential"/>
</dbReference>
<dbReference type="GO" id="GO:0045735">
    <property type="term" value="F:nutrient reservoir activity"/>
    <property type="evidence" value="ECO:0007669"/>
    <property type="project" value="UniProtKB-KW"/>
</dbReference>
<dbReference type="InterPro" id="IPR002530">
    <property type="entry name" value="Zein"/>
</dbReference>
<dbReference type="InterPro" id="IPR051903">
    <property type="entry name" value="Zein-alpha"/>
</dbReference>
<dbReference type="PANTHER" id="PTHR48214">
    <property type="entry name" value="ZEIN-ALPHA PMS2"/>
    <property type="match status" value="1"/>
</dbReference>
<dbReference type="PANTHER" id="PTHR48214:SF1">
    <property type="entry name" value="ZEIN-ALPHA PMS2"/>
    <property type="match status" value="1"/>
</dbReference>
<dbReference type="Pfam" id="PF01559">
    <property type="entry name" value="Zein"/>
    <property type="match status" value="3"/>
</dbReference>
<name>ZEAB_MAIZE</name>